<evidence type="ECO:0000255" key="1">
    <source>
        <dbReference type="HAMAP-Rule" id="MF_00195"/>
    </source>
</evidence>
<keyword id="KW-0342">GTP-binding</keyword>
<keyword id="KW-0547">Nucleotide-binding</keyword>
<keyword id="KW-0677">Repeat</keyword>
<keyword id="KW-0690">Ribosome biogenesis</keyword>
<comment type="function">
    <text evidence="1">GTPase that plays an essential role in the late steps of ribosome biogenesis.</text>
</comment>
<comment type="subunit">
    <text evidence="1">Associates with the 50S ribosomal subunit.</text>
</comment>
<comment type="similarity">
    <text evidence="1">Belongs to the TRAFAC class TrmE-Era-EngA-EngB-Septin-like GTPase superfamily. EngA (Der) GTPase family.</text>
</comment>
<reference key="1">
    <citation type="journal article" date="2006" name="J. Bacteriol.">
        <title>Whole-genome sequence of Listeria welshimeri reveals common steps in genome reduction with Listeria innocua as compared to Listeria monocytogenes.</title>
        <authorList>
            <person name="Hain T."/>
            <person name="Steinweg C."/>
            <person name="Kuenne C.T."/>
            <person name="Billion A."/>
            <person name="Ghai R."/>
            <person name="Chatterjee S.S."/>
            <person name="Domann E."/>
            <person name="Kaerst U."/>
            <person name="Goesmann A."/>
            <person name="Bekel T."/>
            <person name="Bartels D."/>
            <person name="Kaiser O."/>
            <person name="Meyer F."/>
            <person name="Puehler A."/>
            <person name="Weisshaar B."/>
            <person name="Wehland J."/>
            <person name="Liang C."/>
            <person name="Dandekar T."/>
            <person name="Lampidis R."/>
            <person name="Kreft J."/>
            <person name="Goebel W."/>
            <person name="Chakraborty T."/>
        </authorList>
    </citation>
    <scope>NUCLEOTIDE SEQUENCE [LARGE SCALE GENOMIC DNA]</scope>
    <source>
        <strain>ATCC 35897 / DSM 20650 / CCUG 15529 / CIP 8149 / NCTC 11857 / SLCC 5334 / V8</strain>
    </source>
</reference>
<protein>
    <recommendedName>
        <fullName evidence="1">GTPase Der</fullName>
    </recommendedName>
    <alternativeName>
        <fullName evidence="1">GTP-binding protein EngA</fullName>
    </alternativeName>
</protein>
<gene>
    <name evidence="1" type="primary">der</name>
    <name type="synonym">engA</name>
    <name type="ordered locus">lwe1963</name>
</gene>
<sequence>MAKPVVAIVGRPNVGKSTIFNRIVGERVSIVEDVPGVTRDRIYNSAEWLGKEFNIIDTGGIDLSDEPFLEQIRAQAEIAIDEADVIIFITNGREGVTDADEQVAKILYRSNKPIVLAINKVDNPEMRDQIYDFYSLGFGEPYPISGSHGLGLGDMLDAVRAHFPKEEEEEYPDDTVKFSLIGRPNVGKSSILNALLGEDRVIVSDIAGTTRDAIDTTYTFDGQDYVMIDTAGMRKRGKVYESTEKYSVLRAMRAIERSDVVLVVINAEEGIREQDKRIAGYAHDAGRAIIIVVNKWDAINKDEKTINVWTEDIREQFQFLSYAPIVFVSAKTKQRLNNLFPLINQVSDNHSLRVQSSMLNDVISDAVAMNPSPMDRGKRLKIFYTTQVAVKPPTFVVFVNDPELMHFSYERFLENRIREAFPFDGTPIRVIARKRK</sequence>
<name>DER_LISW6</name>
<dbReference type="EMBL" id="AM263198">
    <property type="protein sequence ID" value="CAK21381.1"/>
    <property type="molecule type" value="Genomic_DNA"/>
</dbReference>
<dbReference type="RefSeq" id="WP_011702728.1">
    <property type="nucleotide sequence ID" value="NC_008555.1"/>
</dbReference>
<dbReference type="SMR" id="A0AK49"/>
<dbReference type="STRING" id="386043.lwe1963"/>
<dbReference type="GeneID" id="61189863"/>
<dbReference type="KEGG" id="lwe:lwe1963"/>
<dbReference type="eggNOG" id="COG1160">
    <property type="taxonomic scope" value="Bacteria"/>
</dbReference>
<dbReference type="HOGENOM" id="CLU_016077_6_2_9"/>
<dbReference type="OrthoDB" id="9805918at2"/>
<dbReference type="Proteomes" id="UP000000779">
    <property type="component" value="Chromosome"/>
</dbReference>
<dbReference type="GO" id="GO:0005525">
    <property type="term" value="F:GTP binding"/>
    <property type="evidence" value="ECO:0007669"/>
    <property type="project" value="UniProtKB-UniRule"/>
</dbReference>
<dbReference type="GO" id="GO:0043022">
    <property type="term" value="F:ribosome binding"/>
    <property type="evidence" value="ECO:0007669"/>
    <property type="project" value="TreeGrafter"/>
</dbReference>
<dbReference type="GO" id="GO:0042254">
    <property type="term" value="P:ribosome biogenesis"/>
    <property type="evidence" value="ECO:0007669"/>
    <property type="project" value="UniProtKB-KW"/>
</dbReference>
<dbReference type="CDD" id="cd01894">
    <property type="entry name" value="EngA1"/>
    <property type="match status" value="1"/>
</dbReference>
<dbReference type="CDD" id="cd01895">
    <property type="entry name" value="EngA2"/>
    <property type="match status" value="1"/>
</dbReference>
<dbReference type="FunFam" id="3.30.300.20:FF:000004">
    <property type="entry name" value="GTPase Der"/>
    <property type="match status" value="1"/>
</dbReference>
<dbReference type="FunFam" id="3.40.50.300:FF:000040">
    <property type="entry name" value="GTPase Der"/>
    <property type="match status" value="1"/>
</dbReference>
<dbReference type="FunFam" id="3.40.50.300:FF:000057">
    <property type="entry name" value="GTPase Der"/>
    <property type="match status" value="1"/>
</dbReference>
<dbReference type="Gene3D" id="3.30.300.20">
    <property type="match status" value="1"/>
</dbReference>
<dbReference type="Gene3D" id="3.40.50.300">
    <property type="entry name" value="P-loop containing nucleotide triphosphate hydrolases"/>
    <property type="match status" value="2"/>
</dbReference>
<dbReference type="HAMAP" id="MF_00195">
    <property type="entry name" value="GTPase_Der"/>
    <property type="match status" value="1"/>
</dbReference>
<dbReference type="InterPro" id="IPR031166">
    <property type="entry name" value="G_ENGA"/>
</dbReference>
<dbReference type="InterPro" id="IPR006073">
    <property type="entry name" value="GTP-bd"/>
</dbReference>
<dbReference type="InterPro" id="IPR016484">
    <property type="entry name" value="GTPase_Der"/>
</dbReference>
<dbReference type="InterPro" id="IPR032859">
    <property type="entry name" value="KH_dom-like"/>
</dbReference>
<dbReference type="InterPro" id="IPR015946">
    <property type="entry name" value="KH_dom-like_a/b"/>
</dbReference>
<dbReference type="InterPro" id="IPR027417">
    <property type="entry name" value="P-loop_NTPase"/>
</dbReference>
<dbReference type="InterPro" id="IPR005225">
    <property type="entry name" value="Small_GTP-bd"/>
</dbReference>
<dbReference type="NCBIfam" id="TIGR03594">
    <property type="entry name" value="GTPase_EngA"/>
    <property type="match status" value="1"/>
</dbReference>
<dbReference type="NCBIfam" id="TIGR00231">
    <property type="entry name" value="small_GTP"/>
    <property type="match status" value="2"/>
</dbReference>
<dbReference type="PANTHER" id="PTHR43834">
    <property type="entry name" value="GTPASE DER"/>
    <property type="match status" value="1"/>
</dbReference>
<dbReference type="PANTHER" id="PTHR43834:SF6">
    <property type="entry name" value="GTPASE DER"/>
    <property type="match status" value="1"/>
</dbReference>
<dbReference type="Pfam" id="PF14714">
    <property type="entry name" value="KH_dom-like"/>
    <property type="match status" value="1"/>
</dbReference>
<dbReference type="Pfam" id="PF01926">
    <property type="entry name" value="MMR_HSR1"/>
    <property type="match status" value="2"/>
</dbReference>
<dbReference type="PIRSF" id="PIRSF006485">
    <property type="entry name" value="GTP-binding_EngA"/>
    <property type="match status" value="1"/>
</dbReference>
<dbReference type="PRINTS" id="PR00326">
    <property type="entry name" value="GTP1OBG"/>
</dbReference>
<dbReference type="SUPFAM" id="SSF52540">
    <property type="entry name" value="P-loop containing nucleoside triphosphate hydrolases"/>
    <property type="match status" value="2"/>
</dbReference>
<dbReference type="PROSITE" id="PS51712">
    <property type="entry name" value="G_ENGA"/>
    <property type="match status" value="2"/>
</dbReference>
<accession>A0AK49</accession>
<organism>
    <name type="scientific">Listeria welshimeri serovar 6b (strain ATCC 35897 / DSM 20650 / CCUG 15529 / CIP 8149 / NCTC 11857 / SLCC 5334 / V8)</name>
    <dbReference type="NCBI Taxonomy" id="386043"/>
    <lineage>
        <taxon>Bacteria</taxon>
        <taxon>Bacillati</taxon>
        <taxon>Bacillota</taxon>
        <taxon>Bacilli</taxon>
        <taxon>Bacillales</taxon>
        <taxon>Listeriaceae</taxon>
        <taxon>Listeria</taxon>
    </lineage>
</organism>
<feature type="chain" id="PRO_1000011659" description="GTPase Der">
    <location>
        <begin position="1"/>
        <end position="436"/>
    </location>
</feature>
<feature type="domain" description="EngA-type G 1">
    <location>
        <begin position="4"/>
        <end position="167"/>
    </location>
</feature>
<feature type="domain" description="EngA-type G 2">
    <location>
        <begin position="176"/>
        <end position="351"/>
    </location>
</feature>
<feature type="domain" description="KH-like" evidence="1">
    <location>
        <begin position="352"/>
        <end position="436"/>
    </location>
</feature>
<feature type="binding site" evidence="1">
    <location>
        <begin position="10"/>
        <end position="17"/>
    </location>
    <ligand>
        <name>GTP</name>
        <dbReference type="ChEBI" id="CHEBI:37565"/>
        <label>1</label>
    </ligand>
</feature>
<feature type="binding site" evidence="1">
    <location>
        <begin position="57"/>
        <end position="61"/>
    </location>
    <ligand>
        <name>GTP</name>
        <dbReference type="ChEBI" id="CHEBI:37565"/>
        <label>1</label>
    </ligand>
</feature>
<feature type="binding site" evidence="1">
    <location>
        <begin position="119"/>
        <end position="122"/>
    </location>
    <ligand>
        <name>GTP</name>
        <dbReference type="ChEBI" id="CHEBI:37565"/>
        <label>1</label>
    </ligand>
</feature>
<feature type="binding site" evidence="1">
    <location>
        <begin position="182"/>
        <end position="189"/>
    </location>
    <ligand>
        <name>GTP</name>
        <dbReference type="ChEBI" id="CHEBI:37565"/>
        <label>2</label>
    </ligand>
</feature>
<feature type="binding site" evidence="1">
    <location>
        <begin position="229"/>
        <end position="233"/>
    </location>
    <ligand>
        <name>GTP</name>
        <dbReference type="ChEBI" id="CHEBI:37565"/>
        <label>2</label>
    </ligand>
</feature>
<feature type="binding site" evidence="1">
    <location>
        <begin position="294"/>
        <end position="297"/>
    </location>
    <ligand>
        <name>GTP</name>
        <dbReference type="ChEBI" id="CHEBI:37565"/>
        <label>2</label>
    </ligand>
</feature>
<proteinExistence type="inferred from homology"/>